<dbReference type="EMBL" id="Z54151">
    <property type="protein sequence ID" value="CAA90865.1"/>
    <property type="molecule type" value="mRNA"/>
</dbReference>
<dbReference type="SMR" id="P55076"/>
<dbReference type="GO" id="GO:0005576">
    <property type="term" value="C:extracellular region"/>
    <property type="evidence" value="ECO:0007669"/>
    <property type="project" value="UniProtKB-SubCell"/>
</dbReference>
<dbReference type="GO" id="GO:0042612">
    <property type="term" value="C:MHC class I protein complex"/>
    <property type="evidence" value="ECO:0007669"/>
    <property type="project" value="UniProtKB-KW"/>
</dbReference>
<dbReference type="GO" id="GO:0002474">
    <property type="term" value="P:antigen processing and presentation of peptide antigen via MHC class I"/>
    <property type="evidence" value="ECO:0007669"/>
    <property type="project" value="UniProtKB-KW"/>
</dbReference>
<dbReference type="FunFam" id="2.60.40.10:FF:001005">
    <property type="entry name" value="Beta-2-microglobulin"/>
    <property type="match status" value="1"/>
</dbReference>
<dbReference type="Gene3D" id="2.60.40.10">
    <property type="entry name" value="Immunoglobulins"/>
    <property type="match status" value="1"/>
</dbReference>
<dbReference type="InterPro" id="IPR007110">
    <property type="entry name" value="Ig-like_dom"/>
</dbReference>
<dbReference type="InterPro" id="IPR036179">
    <property type="entry name" value="Ig-like_dom_sf"/>
</dbReference>
<dbReference type="InterPro" id="IPR013783">
    <property type="entry name" value="Ig-like_fold"/>
</dbReference>
<dbReference type="InterPro" id="IPR003006">
    <property type="entry name" value="Ig/MHC_CS"/>
</dbReference>
<dbReference type="InterPro" id="IPR003597">
    <property type="entry name" value="Ig_C1-set"/>
</dbReference>
<dbReference type="InterPro" id="IPR050160">
    <property type="entry name" value="MHC/Immunoglobulin"/>
</dbReference>
<dbReference type="PANTHER" id="PTHR19944:SF62">
    <property type="entry name" value="BETA-2-MICROGLOBULIN"/>
    <property type="match status" value="1"/>
</dbReference>
<dbReference type="PANTHER" id="PTHR19944">
    <property type="entry name" value="MHC CLASS II-RELATED"/>
    <property type="match status" value="1"/>
</dbReference>
<dbReference type="Pfam" id="PF07654">
    <property type="entry name" value="C1-set"/>
    <property type="match status" value="1"/>
</dbReference>
<dbReference type="SMART" id="SM00407">
    <property type="entry name" value="IGc1"/>
    <property type="match status" value="1"/>
</dbReference>
<dbReference type="SUPFAM" id="SSF48726">
    <property type="entry name" value="Immunoglobulin"/>
    <property type="match status" value="1"/>
</dbReference>
<dbReference type="PROSITE" id="PS50835">
    <property type="entry name" value="IG_LIKE"/>
    <property type="match status" value="1"/>
</dbReference>
<dbReference type="PROSITE" id="PS00290">
    <property type="entry name" value="IG_MHC"/>
    <property type="match status" value="1"/>
</dbReference>
<comment type="function">
    <text evidence="1">Component of the class I major histocompatibility complex (MHC). Involved in the presentation of peptide antigens to the immune system (By similarity).</text>
</comment>
<comment type="subunit">
    <text evidence="1">Heterodimer of an alpha chain and a beta chain. Beta-2-microglobulin is the beta-chain of major histocompatibility complex class I molecules (By similarity).</text>
</comment>
<comment type="subcellular location">
    <subcellularLocation>
        <location evidence="1">Secreted</location>
    </subcellularLocation>
</comment>
<comment type="similarity">
    <text evidence="4">Belongs to the beta-2-microglobulin family.</text>
</comment>
<organism>
    <name type="scientific">Labeobarbus intermedius</name>
    <name type="common">Lake tana barbels</name>
    <name type="synonym">Barbus intermedius</name>
    <dbReference type="NCBI Taxonomy" id="40831"/>
    <lineage>
        <taxon>Eukaryota</taxon>
        <taxon>Metazoa</taxon>
        <taxon>Chordata</taxon>
        <taxon>Craniata</taxon>
        <taxon>Vertebrata</taxon>
        <taxon>Euteleostomi</taxon>
        <taxon>Actinopterygii</taxon>
        <taxon>Neopterygii</taxon>
        <taxon>Teleostei</taxon>
        <taxon>Ostariophysi</taxon>
        <taxon>Cypriniformes</taxon>
        <taxon>Cyprinidae</taxon>
        <taxon>Torinae</taxon>
        <taxon>Labeobarbus</taxon>
    </lineage>
</organism>
<protein>
    <recommendedName>
        <fullName>Beta-2-microglobulin</fullName>
    </recommendedName>
</protein>
<keyword id="KW-1015">Disulfide bond</keyword>
<keyword id="KW-0391">Immunity</keyword>
<keyword id="KW-0393">Immunoglobulin domain</keyword>
<keyword id="KW-0490">MHC I</keyword>
<keyword id="KW-0964">Secreted</keyword>
<keyword id="KW-0732">Signal</keyword>
<evidence type="ECO:0000250" key="1"/>
<evidence type="ECO:0000255" key="2"/>
<evidence type="ECO:0000255" key="3">
    <source>
        <dbReference type="PROSITE-ProRule" id="PRU00114"/>
    </source>
</evidence>
<evidence type="ECO:0000305" key="4"/>
<sequence length="116" mass="13224">MRAIITFALFCVLYITVQAKTSSPKVQVYSHFPGEYGKENTLICHVSGFHPPDITIELLRNGEILPNTQQTDLAFEKGRQFHLTKSVSFTPERGLDYACKVRHMSNTNAYSWEPNM</sequence>
<accession>P55076</accession>
<proteinExistence type="inferred from homology"/>
<gene>
    <name type="primary">b2m</name>
</gene>
<feature type="signal peptide" evidence="2">
    <location>
        <begin position="1"/>
        <end position="19"/>
    </location>
</feature>
<feature type="chain" id="PRO_0000018806" description="Beta-2-microglobulin">
    <location>
        <begin position="20"/>
        <end position="116"/>
    </location>
</feature>
<feature type="domain" description="Ig-like C1-type">
    <location>
        <begin position="24"/>
        <end position="111"/>
    </location>
</feature>
<feature type="disulfide bond" evidence="3">
    <location>
        <begin position="44"/>
        <end position="99"/>
    </location>
</feature>
<name>B2MG_LABIN</name>
<reference key="1">
    <citation type="journal article" date="1996" name="Immunogenetics">
        <title>Evolution of MHC class II beta chain-encoding genes in the Lake Tana barbel species flock (Barbus intermedius complex).</title>
        <authorList>
            <person name="Dixon B."/>
            <person name="Nagelkerke L.A."/>
            <person name="Sibbing F.A."/>
            <person name="Egberts E."/>
            <person name="Stet R.J."/>
        </authorList>
    </citation>
    <scope>NUCLEOTIDE SEQUENCE [MRNA]</scope>
</reference>